<sequence length="732" mass="79936">MHCHNDDVRFSSSSIRIHSPSPKEQHSLLTNLQSCSKTFVSHLSNTRNSLNQMLQSLKNRHTPPPRSVRRPNLPTQMLNSVTQLMIGKSSPISLSLIQSTQFNWSESRDENVETIRGLSSPLLCCASLSLTRPNESTQSVEGKDTVQQQKGHSVSRNAEERVLISEVLVRTKDGEELERKDLEMEALAALKACRANSALTIREVQEDVHRIIESGYFCSCTPVAVDTRDGIRLMFQVEPNQEFRGLVCENANVLPSKFIHEAFRDGFGKVINIKRLEEAITSINGWYMERGLFGIVSDIDTLSGGIVRLQVAEAEVNNISIRFLDRKTGEPTKGKTSPETILRQLTTKKGQVYSMLQGKRDVDTVLAMGIMEDVSIIPQPAGDSGKVDLIMNCVERPSGGFSAGGGISSGITSGPLSGLIGSFAYSHRNLFGRNQKLNVSLERGQIDSIFRINYTDPWIEGDDKRTSRSIMVQNSRTPGNLVHGNQPDNSSLTIGRVTAGVEYSRPFRPKWNGTAGLIFQHAGARDEQGNPIIKDFYSSPLTASGKPHDETMLAKLESIYTGSGDQGSTMFAFNMEQGLPVLPEWLCFNRVTGRARKGIHIGPARFLFSLSGGHVVGKFSPHEAFVIGGTNSVRGYEEGAVGSGRSYVVGSGELSFPVRGPVEGVIFTDYGTDMGSGSTVPGDPAGARLKPGSGYGYGLGVRVDSPLGPLRLEYAFNDQHAGRFHFGVGLRN</sequence>
<keyword id="KW-0150">Chloroplast</keyword>
<keyword id="KW-0472">Membrane</keyword>
<keyword id="KW-0934">Plastid</keyword>
<keyword id="KW-1002">Plastid outer membrane</keyword>
<keyword id="KW-1185">Reference proteome</keyword>
<dbReference type="EMBL" id="AF296838">
    <property type="status" value="NOT_ANNOTATED_CDS"/>
    <property type="molecule type" value="Genomic_DNA"/>
</dbReference>
<dbReference type="EMBL" id="CP002688">
    <property type="protein sequence ID" value="AED92731.1"/>
    <property type="molecule type" value="Genomic_DNA"/>
</dbReference>
<dbReference type="EMBL" id="AF360205">
    <property type="protein sequence ID" value="AAK25915.1"/>
    <property type="molecule type" value="mRNA"/>
</dbReference>
<dbReference type="EMBL" id="AY040053">
    <property type="protein sequence ID" value="AAK64111.1"/>
    <property type="molecule type" value="mRNA"/>
</dbReference>
<dbReference type="RefSeq" id="NP_568378.1">
    <property type="nucleotide sequence ID" value="NM_121967.4"/>
</dbReference>
<dbReference type="SMR" id="Q9C5J8"/>
<dbReference type="BioGRID" id="17358">
    <property type="interactions" value="8"/>
</dbReference>
<dbReference type="FunCoup" id="Q9C5J8">
    <property type="interactions" value="587"/>
</dbReference>
<dbReference type="STRING" id="3702.Q9C5J8"/>
<dbReference type="TCDB" id="1.B.33.2.2">
    <property type="family name" value="the outer membrane protein insertion porin (bam complex) (ompip) family"/>
</dbReference>
<dbReference type="SwissPalm" id="Q9C5J8"/>
<dbReference type="PaxDb" id="3702-AT5G19620.1"/>
<dbReference type="ProteomicsDB" id="238922"/>
<dbReference type="EnsemblPlants" id="AT5G19620.1">
    <property type="protein sequence ID" value="AT5G19620.1"/>
    <property type="gene ID" value="AT5G19620"/>
</dbReference>
<dbReference type="GeneID" id="832082"/>
<dbReference type="Gramene" id="AT5G19620.1">
    <property type="protein sequence ID" value="AT5G19620.1"/>
    <property type="gene ID" value="AT5G19620"/>
</dbReference>
<dbReference type="KEGG" id="ath:AT5G19620"/>
<dbReference type="Araport" id="AT5G19620"/>
<dbReference type="TAIR" id="AT5G19620">
    <property type="gene designation" value="OEP80"/>
</dbReference>
<dbReference type="eggNOG" id="ENOG502QSQ3">
    <property type="taxonomic scope" value="Eukaryota"/>
</dbReference>
<dbReference type="HOGENOM" id="CLU_007664_2_1_1"/>
<dbReference type="InParanoid" id="Q9C5J8"/>
<dbReference type="OMA" id="PPYEAFC"/>
<dbReference type="OrthoDB" id="2013615at2759"/>
<dbReference type="PhylomeDB" id="Q9C5J8"/>
<dbReference type="PRO" id="PR:Q9C5J8"/>
<dbReference type="Proteomes" id="UP000006548">
    <property type="component" value="Chromosome 5"/>
</dbReference>
<dbReference type="ExpressionAtlas" id="Q9C5J8">
    <property type="expression patterns" value="baseline and differential"/>
</dbReference>
<dbReference type="GO" id="GO:0009507">
    <property type="term" value="C:chloroplast"/>
    <property type="evidence" value="ECO:0007005"/>
    <property type="project" value="TAIR"/>
</dbReference>
<dbReference type="GO" id="GO:0009941">
    <property type="term" value="C:chloroplast envelope"/>
    <property type="evidence" value="ECO:0000314"/>
    <property type="project" value="TAIR"/>
</dbReference>
<dbReference type="GO" id="GO:0009707">
    <property type="term" value="C:chloroplast outer membrane"/>
    <property type="evidence" value="ECO:0007669"/>
    <property type="project" value="UniProtKB-SubCell"/>
</dbReference>
<dbReference type="GO" id="GO:0009536">
    <property type="term" value="C:plastid"/>
    <property type="evidence" value="ECO:0007005"/>
    <property type="project" value="TAIR"/>
</dbReference>
<dbReference type="GO" id="GO:0009658">
    <property type="term" value="P:chloroplast organization"/>
    <property type="evidence" value="ECO:0000315"/>
    <property type="project" value="TAIR"/>
</dbReference>
<dbReference type="FunFam" id="3.10.20.310:FF:000013">
    <property type="entry name" value="Outer envelope protein 80 chloroplastic"/>
    <property type="match status" value="1"/>
</dbReference>
<dbReference type="FunFam" id="2.40.160.50:FF:000006">
    <property type="entry name" value="Outer envelope protein 80, chloroplastic"/>
    <property type="match status" value="1"/>
</dbReference>
<dbReference type="FunFam" id="3.10.20.310:FF:000012">
    <property type="entry name" value="Outer envelope protein 80, chloroplastic"/>
    <property type="match status" value="1"/>
</dbReference>
<dbReference type="FunFam" id="3.10.20.310:FF:000014">
    <property type="entry name" value="Outer envelope protein 80, chloroplastic"/>
    <property type="match status" value="1"/>
</dbReference>
<dbReference type="Gene3D" id="3.10.20.310">
    <property type="entry name" value="membrane protein fhac"/>
    <property type="match status" value="3"/>
</dbReference>
<dbReference type="Gene3D" id="2.40.160.50">
    <property type="entry name" value="membrane protein fhac: a member of the omp85/tpsb transporter family"/>
    <property type="match status" value="1"/>
</dbReference>
<dbReference type="InterPro" id="IPR000184">
    <property type="entry name" value="Bac_surfAg_D15"/>
</dbReference>
<dbReference type="InterPro" id="IPR039910">
    <property type="entry name" value="D15-like"/>
</dbReference>
<dbReference type="InterPro" id="IPR034746">
    <property type="entry name" value="POTRA"/>
</dbReference>
<dbReference type="PANTHER" id="PTHR12815:SF32">
    <property type="entry name" value="OUTER ENVELOPE PROTEIN 80, CHLOROPLASTIC"/>
    <property type="match status" value="1"/>
</dbReference>
<dbReference type="PANTHER" id="PTHR12815">
    <property type="entry name" value="SORTING AND ASSEMBLY MACHINERY SAMM50 PROTEIN FAMILY MEMBER"/>
    <property type="match status" value="1"/>
</dbReference>
<dbReference type="Pfam" id="PF01103">
    <property type="entry name" value="Omp85"/>
    <property type="match status" value="1"/>
</dbReference>
<dbReference type="PROSITE" id="PS51779">
    <property type="entry name" value="POTRA"/>
    <property type="match status" value="1"/>
</dbReference>
<name>OEP80_ARATH</name>
<accession>Q9C5J8</accession>
<reference key="1">
    <citation type="journal article" date="2000" name="Nature">
        <title>Sequence and analysis of chromosome 5 of the plant Arabidopsis thaliana.</title>
        <authorList>
            <person name="Tabata S."/>
            <person name="Kaneko T."/>
            <person name="Nakamura Y."/>
            <person name="Kotani H."/>
            <person name="Kato T."/>
            <person name="Asamizu E."/>
            <person name="Miyajima N."/>
            <person name="Sasamoto S."/>
            <person name="Kimura T."/>
            <person name="Hosouchi T."/>
            <person name="Kawashima K."/>
            <person name="Kohara M."/>
            <person name="Matsumoto M."/>
            <person name="Matsuno A."/>
            <person name="Muraki A."/>
            <person name="Nakayama S."/>
            <person name="Nakazaki N."/>
            <person name="Naruo K."/>
            <person name="Okumura S."/>
            <person name="Shinpo S."/>
            <person name="Takeuchi C."/>
            <person name="Wada T."/>
            <person name="Watanabe A."/>
            <person name="Yamada M."/>
            <person name="Yasuda M."/>
            <person name="Sato S."/>
            <person name="de la Bastide M."/>
            <person name="Huang E."/>
            <person name="Spiegel L."/>
            <person name="Gnoj L."/>
            <person name="O'Shaughnessy A."/>
            <person name="Preston R."/>
            <person name="Habermann K."/>
            <person name="Murray J."/>
            <person name="Johnson D."/>
            <person name="Rohlfing T."/>
            <person name="Nelson J."/>
            <person name="Stoneking T."/>
            <person name="Pepin K."/>
            <person name="Spieth J."/>
            <person name="Sekhon M."/>
            <person name="Armstrong J."/>
            <person name="Becker M."/>
            <person name="Belter E."/>
            <person name="Cordum H."/>
            <person name="Cordes M."/>
            <person name="Courtney L."/>
            <person name="Courtney W."/>
            <person name="Dante M."/>
            <person name="Du H."/>
            <person name="Edwards J."/>
            <person name="Fryman J."/>
            <person name="Haakensen B."/>
            <person name="Lamar E."/>
            <person name="Latreille P."/>
            <person name="Leonard S."/>
            <person name="Meyer R."/>
            <person name="Mulvaney E."/>
            <person name="Ozersky P."/>
            <person name="Riley A."/>
            <person name="Strowmatt C."/>
            <person name="Wagner-McPherson C."/>
            <person name="Wollam A."/>
            <person name="Yoakum M."/>
            <person name="Bell M."/>
            <person name="Dedhia N."/>
            <person name="Parnell L."/>
            <person name="Shah R."/>
            <person name="Rodriguez M."/>
            <person name="Hoon See L."/>
            <person name="Vil D."/>
            <person name="Baker J."/>
            <person name="Kirchoff K."/>
            <person name="Toth K."/>
            <person name="King L."/>
            <person name="Bahret A."/>
            <person name="Miller B."/>
            <person name="Marra M.A."/>
            <person name="Martienssen R."/>
            <person name="McCombie W.R."/>
            <person name="Wilson R.K."/>
            <person name="Murphy G."/>
            <person name="Bancroft I."/>
            <person name="Volckaert G."/>
            <person name="Wambutt R."/>
            <person name="Duesterhoeft A."/>
            <person name="Stiekema W."/>
            <person name="Pohl T."/>
            <person name="Entian K.-D."/>
            <person name="Terryn N."/>
            <person name="Hartley N."/>
            <person name="Bent E."/>
            <person name="Johnson S."/>
            <person name="Langham S.-A."/>
            <person name="McCullagh B."/>
            <person name="Robben J."/>
            <person name="Grymonprez B."/>
            <person name="Zimmermann W."/>
            <person name="Ramsperger U."/>
            <person name="Wedler H."/>
            <person name="Balke K."/>
            <person name="Wedler E."/>
            <person name="Peters S."/>
            <person name="van Staveren M."/>
            <person name="Dirkse W."/>
            <person name="Mooijman P."/>
            <person name="Klein Lankhorst R."/>
            <person name="Weitzenegger T."/>
            <person name="Bothe G."/>
            <person name="Rose M."/>
            <person name="Hauf J."/>
            <person name="Berneiser S."/>
            <person name="Hempel S."/>
            <person name="Feldpausch M."/>
            <person name="Lamberth S."/>
            <person name="Villarroel R."/>
            <person name="Gielen J."/>
            <person name="Ardiles W."/>
            <person name="Bents O."/>
            <person name="Lemcke K."/>
            <person name="Kolesov G."/>
            <person name="Mayer K.F.X."/>
            <person name="Rudd S."/>
            <person name="Schoof H."/>
            <person name="Schueller C."/>
            <person name="Zaccaria P."/>
            <person name="Mewes H.-W."/>
            <person name="Bevan M."/>
            <person name="Fransz P.F."/>
        </authorList>
    </citation>
    <scope>NUCLEOTIDE SEQUENCE [LARGE SCALE GENOMIC DNA]</scope>
    <source>
        <strain>cv. Columbia</strain>
    </source>
</reference>
<reference key="2">
    <citation type="journal article" date="2017" name="Plant J.">
        <title>Araport11: a complete reannotation of the Arabidopsis thaliana reference genome.</title>
        <authorList>
            <person name="Cheng C.Y."/>
            <person name="Krishnakumar V."/>
            <person name="Chan A.P."/>
            <person name="Thibaud-Nissen F."/>
            <person name="Schobel S."/>
            <person name="Town C.D."/>
        </authorList>
    </citation>
    <scope>GENOME REANNOTATION</scope>
    <source>
        <strain>cv. Columbia</strain>
    </source>
</reference>
<reference key="3">
    <citation type="journal article" date="2003" name="Science">
        <title>Empirical analysis of transcriptional activity in the Arabidopsis genome.</title>
        <authorList>
            <person name="Yamada K."/>
            <person name="Lim J."/>
            <person name="Dale J.M."/>
            <person name="Chen H."/>
            <person name="Shinn P."/>
            <person name="Palm C.J."/>
            <person name="Southwick A.M."/>
            <person name="Wu H.C."/>
            <person name="Kim C.J."/>
            <person name="Nguyen M."/>
            <person name="Pham P.K."/>
            <person name="Cheuk R.F."/>
            <person name="Karlin-Newmann G."/>
            <person name="Liu S.X."/>
            <person name="Lam B."/>
            <person name="Sakano H."/>
            <person name="Wu T."/>
            <person name="Yu G."/>
            <person name="Miranda M."/>
            <person name="Quach H.L."/>
            <person name="Tripp M."/>
            <person name="Chang C.H."/>
            <person name="Lee J.M."/>
            <person name="Toriumi M.J."/>
            <person name="Chan M.M."/>
            <person name="Tang C.C."/>
            <person name="Onodera C.S."/>
            <person name="Deng J.M."/>
            <person name="Akiyama K."/>
            <person name="Ansari Y."/>
            <person name="Arakawa T."/>
            <person name="Banh J."/>
            <person name="Banno F."/>
            <person name="Bowser L."/>
            <person name="Brooks S.Y."/>
            <person name="Carninci P."/>
            <person name="Chao Q."/>
            <person name="Choy N."/>
            <person name="Enju A."/>
            <person name="Goldsmith A.D."/>
            <person name="Gurjal M."/>
            <person name="Hansen N.F."/>
            <person name="Hayashizaki Y."/>
            <person name="Johnson-Hopson C."/>
            <person name="Hsuan V.W."/>
            <person name="Iida K."/>
            <person name="Karnes M."/>
            <person name="Khan S."/>
            <person name="Koesema E."/>
            <person name="Ishida J."/>
            <person name="Jiang P.X."/>
            <person name="Jones T."/>
            <person name="Kawai J."/>
            <person name="Kamiya A."/>
            <person name="Meyers C."/>
            <person name="Nakajima M."/>
            <person name="Narusaka M."/>
            <person name="Seki M."/>
            <person name="Sakurai T."/>
            <person name="Satou M."/>
            <person name="Tamse R."/>
            <person name="Vaysberg M."/>
            <person name="Wallender E.K."/>
            <person name="Wong C."/>
            <person name="Yamamura Y."/>
            <person name="Yuan S."/>
            <person name="Shinozaki K."/>
            <person name="Davis R.W."/>
            <person name="Theologis A."/>
            <person name="Ecker J.R."/>
        </authorList>
    </citation>
    <scope>NUCLEOTIDE SEQUENCE [LARGE SCALE MRNA]</scope>
    <source>
        <strain>cv. Columbia</strain>
    </source>
</reference>
<reference key="4">
    <citation type="journal article" date="2002" name="EMBO Rep.">
        <title>A Toc75-like protein import channel is abundant in chloroplasts.</title>
        <authorList>
            <person name="Eckart K."/>
            <person name="Eichacker L."/>
            <person name="Sohrt K."/>
            <person name="Schleiff E."/>
            <person name="Heins L."/>
            <person name="Soll J."/>
        </authorList>
    </citation>
    <scope>IDENTIFICATION</scope>
    <scope>SUBCELLULAR LOCATION</scope>
</reference>
<reference key="5">
    <citation type="journal article" date="2004" name="Plant J.">
        <title>The chloroplastic protein translocation channel Toc75 and its paralog OEP80 represent two distinct protein families and are targeted to the chloroplastic outer envelope by different mechanisms.</title>
        <authorList>
            <person name="Inoue K."/>
            <person name="Potter D."/>
        </authorList>
    </citation>
    <scope>SUBCELLULAR LOCATION</scope>
    <scope>LACK OF PROCESSING</scope>
</reference>
<reference key="6">
    <citation type="journal article" date="2008" name="Plant Physiol.">
        <title>The Omp85-related chloroplast outer envelope protein OEP80 is essential for viability in Arabidopsis.</title>
        <authorList>
            <person name="Patel R."/>
            <person name="Hsu S.-C."/>
            <person name="Bedard J."/>
            <person name="Inoue K."/>
            <person name="Jarvis P."/>
        </authorList>
    </citation>
    <scope>FUNCTION</scope>
    <scope>DEVELOPMENTAL STAGE</scope>
    <scope>LACK OF PROCESSING</scope>
    <scope>DISRUPTION PHENOTYPE</scope>
</reference>
<gene>
    <name type="primary">OEP80</name>
    <name type="ordered locus">At5g19620</name>
    <name type="ORF">T29J13.40</name>
</gene>
<organism>
    <name type="scientific">Arabidopsis thaliana</name>
    <name type="common">Mouse-ear cress</name>
    <dbReference type="NCBI Taxonomy" id="3702"/>
    <lineage>
        <taxon>Eukaryota</taxon>
        <taxon>Viridiplantae</taxon>
        <taxon>Streptophyta</taxon>
        <taxon>Embryophyta</taxon>
        <taxon>Tracheophyta</taxon>
        <taxon>Spermatophyta</taxon>
        <taxon>Magnoliopsida</taxon>
        <taxon>eudicotyledons</taxon>
        <taxon>Gunneridae</taxon>
        <taxon>Pentapetalae</taxon>
        <taxon>rosids</taxon>
        <taxon>malvids</taxon>
        <taxon>Brassicales</taxon>
        <taxon>Brassicaceae</taxon>
        <taxon>Camelineae</taxon>
        <taxon>Arabidopsis</taxon>
    </lineage>
</organism>
<feature type="chain" id="PRO_0000352174" description="Outer envelope protein 80, chloroplastic">
    <location>
        <begin position="1"/>
        <end position="732"/>
    </location>
</feature>
<feature type="domain" description="POTRA" evidence="1">
    <location>
        <begin position="314"/>
        <end position="396"/>
    </location>
</feature>
<feature type="region of interest" description="Disordered" evidence="2">
    <location>
        <begin position="1"/>
        <end position="23"/>
    </location>
</feature>
<feature type="region of interest" description="Disordered" evidence="2">
    <location>
        <begin position="135"/>
        <end position="154"/>
    </location>
</feature>
<feature type="compositionally biased region" description="Low complexity" evidence="2">
    <location>
        <begin position="11"/>
        <end position="20"/>
    </location>
</feature>
<proteinExistence type="evidence at transcript level"/>
<evidence type="ECO:0000255" key="1">
    <source>
        <dbReference type="PROSITE-ProRule" id="PRU01115"/>
    </source>
</evidence>
<evidence type="ECO:0000256" key="2">
    <source>
        <dbReference type="SAM" id="MobiDB-lite"/>
    </source>
</evidence>
<evidence type="ECO:0000269" key="3">
    <source>
    </source>
</evidence>
<evidence type="ECO:0000269" key="4">
    <source>
    </source>
</evidence>
<evidence type="ECO:0000269" key="5">
    <source>
    </source>
</evidence>
<evidence type="ECO:0000305" key="6"/>
<protein>
    <recommendedName>
        <fullName>Outer envelope protein 80, chloroplastic</fullName>
    </recommendedName>
    <alternativeName>
        <fullName>Chloroplastic outer envelope protein of 80 kDa</fullName>
        <shortName>AtOEP80</shortName>
    </alternativeName>
    <alternativeName>
        <fullName>Protein TOC75-V</fullName>
        <shortName>AtToc75-V</shortName>
    </alternativeName>
</protein>
<comment type="function">
    <text evidence="5">Plays an essential role during early stages of plastid development.</text>
</comment>
<comment type="subcellular location">
    <subcellularLocation>
        <location evidence="3 4">Plastid</location>
        <location evidence="3 4">Chloroplast outer membrane</location>
    </subcellularLocation>
</comment>
<comment type="developmental stage">
    <text evidence="5">Expressed throughout development.</text>
</comment>
<comment type="domain">
    <text>The N-terminal domain (1-52) is not required for import, membrane integration or activity.</text>
</comment>
<comment type="disruption phenotype">
    <text evidence="5">Embryo lethality at the globular stage.</text>
</comment>
<comment type="miscellaneous">
    <text>Probably not processed upon targeting to chloroplasts. The targeting is independent of the general import pathway.</text>
</comment>
<comment type="similarity">
    <text evidence="6">Belongs to the OEP80 (TC 1.B.33.2) family.</text>
</comment>